<comment type="function">
    <text evidence="1">DNA-dependent RNA polymerase catalyzes the transcription of DNA into RNA using the four ribonucleoside triphosphates as substrates.</text>
</comment>
<comment type="catalytic activity">
    <reaction evidence="1">
        <text>RNA(n) + a ribonucleoside 5'-triphosphate = RNA(n+1) + diphosphate</text>
        <dbReference type="Rhea" id="RHEA:21248"/>
        <dbReference type="Rhea" id="RHEA-COMP:14527"/>
        <dbReference type="Rhea" id="RHEA-COMP:17342"/>
        <dbReference type="ChEBI" id="CHEBI:33019"/>
        <dbReference type="ChEBI" id="CHEBI:61557"/>
        <dbReference type="ChEBI" id="CHEBI:140395"/>
        <dbReference type="EC" id="2.7.7.6"/>
    </reaction>
</comment>
<comment type="subunit">
    <text evidence="1">The RNAP catalytic core consists of 2 alpha, 1 beta, 1 beta' and 1 omega subunit. When a sigma factor is associated with the core the holoenzyme is formed, which can initiate transcription.</text>
</comment>
<comment type="similarity">
    <text evidence="1">Belongs to the RNA polymerase beta chain family.</text>
</comment>
<gene>
    <name evidence="1" type="primary">rpoB</name>
    <name type="ordered locus">BF4015</name>
</gene>
<reference key="1">
    <citation type="journal article" date="2005" name="Science">
        <title>Extensive DNA inversions in the B. fragilis genome control variable gene expression.</title>
        <authorList>
            <person name="Cerdeno-Tarraga A.-M."/>
            <person name="Patrick S."/>
            <person name="Crossman L.C."/>
            <person name="Blakely G."/>
            <person name="Abratt V."/>
            <person name="Lennard N."/>
            <person name="Poxton I."/>
            <person name="Duerden B."/>
            <person name="Harris B."/>
            <person name="Quail M.A."/>
            <person name="Barron A."/>
            <person name="Clark L."/>
            <person name="Corton C."/>
            <person name="Doggett J."/>
            <person name="Holden M.T.G."/>
            <person name="Larke N."/>
            <person name="Line A."/>
            <person name="Lord A."/>
            <person name="Norbertczak H."/>
            <person name="Ormond D."/>
            <person name="Price C."/>
            <person name="Rabbinowitsch E."/>
            <person name="Woodward J."/>
            <person name="Barrell B.G."/>
            <person name="Parkhill J."/>
        </authorList>
    </citation>
    <scope>NUCLEOTIDE SEQUENCE [LARGE SCALE GENOMIC DNA]</scope>
    <source>
        <strain>ATCC 25285 / DSM 2151 / CCUG 4856 / JCM 11019 / LMG 10263 / NCTC 9343 / Onslow / VPI 2553 / EN-2</strain>
    </source>
</reference>
<proteinExistence type="inferred from homology"/>
<dbReference type="EC" id="2.7.7.6" evidence="1"/>
<dbReference type="EMBL" id="CR626927">
    <property type="protein sequence ID" value="CAH09691.1"/>
    <property type="molecule type" value="Genomic_DNA"/>
</dbReference>
<dbReference type="RefSeq" id="WP_005791521.1">
    <property type="nucleotide sequence ID" value="NZ_UFTH01000001.1"/>
</dbReference>
<dbReference type="SMR" id="Q5L897"/>
<dbReference type="PaxDb" id="272559-BF9343_3910"/>
<dbReference type="GeneID" id="60367309"/>
<dbReference type="KEGG" id="bfs:BF9343_3910"/>
<dbReference type="eggNOG" id="COG0085">
    <property type="taxonomic scope" value="Bacteria"/>
</dbReference>
<dbReference type="HOGENOM" id="CLU_000524_4_1_10"/>
<dbReference type="Proteomes" id="UP000006731">
    <property type="component" value="Chromosome"/>
</dbReference>
<dbReference type="GO" id="GO:0000428">
    <property type="term" value="C:DNA-directed RNA polymerase complex"/>
    <property type="evidence" value="ECO:0007669"/>
    <property type="project" value="UniProtKB-KW"/>
</dbReference>
<dbReference type="GO" id="GO:0003677">
    <property type="term" value="F:DNA binding"/>
    <property type="evidence" value="ECO:0007669"/>
    <property type="project" value="UniProtKB-UniRule"/>
</dbReference>
<dbReference type="GO" id="GO:0003899">
    <property type="term" value="F:DNA-directed RNA polymerase activity"/>
    <property type="evidence" value="ECO:0007669"/>
    <property type="project" value="UniProtKB-UniRule"/>
</dbReference>
<dbReference type="GO" id="GO:0032549">
    <property type="term" value="F:ribonucleoside binding"/>
    <property type="evidence" value="ECO:0007669"/>
    <property type="project" value="InterPro"/>
</dbReference>
<dbReference type="GO" id="GO:0006351">
    <property type="term" value="P:DNA-templated transcription"/>
    <property type="evidence" value="ECO:0007669"/>
    <property type="project" value="UniProtKB-UniRule"/>
</dbReference>
<dbReference type="CDD" id="cd00653">
    <property type="entry name" value="RNA_pol_B_RPB2"/>
    <property type="match status" value="1"/>
</dbReference>
<dbReference type="Gene3D" id="2.40.50.100">
    <property type="match status" value="1"/>
</dbReference>
<dbReference type="Gene3D" id="2.40.50.150">
    <property type="match status" value="1"/>
</dbReference>
<dbReference type="Gene3D" id="3.90.1100.10">
    <property type="match status" value="2"/>
</dbReference>
<dbReference type="Gene3D" id="2.30.150.10">
    <property type="entry name" value="DNA-directed RNA polymerase, beta subunit, external 1 domain"/>
    <property type="match status" value="1"/>
</dbReference>
<dbReference type="Gene3D" id="2.40.270.10">
    <property type="entry name" value="DNA-directed RNA polymerase, subunit 2, domain 6"/>
    <property type="match status" value="3"/>
</dbReference>
<dbReference type="Gene3D" id="3.90.1800.10">
    <property type="entry name" value="RNA polymerase alpha subunit dimerisation domain"/>
    <property type="match status" value="1"/>
</dbReference>
<dbReference type="Gene3D" id="3.90.1110.10">
    <property type="entry name" value="RNA polymerase Rpb2, domain 2"/>
    <property type="match status" value="2"/>
</dbReference>
<dbReference type="HAMAP" id="MF_01321">
    <property type="entry name" value="RNApol_bact_RpoB"/>
    <property type="match status" value="1"/>
</dbReference>
<dbReference type="InterPro" id="IPR042107">
    <property type="entry name" value="DNA-dir_RNA_pol_bsu_ext_1_sf"/>
</dbReference>
<dbReference type="InterPro" id="IPR019462">
    <property type="entry name" value="DNA-dir_RNA_pol_bsu_external_1"/>
</dbReference>
<dbReference type="InterPro" id="IPR015712">
    <property type="entry name" value="DNA-dir_RNA_pol_su2"/>
</dbReference>
<dbReference type="InterPro" id="IPR007120">
    <property type="entry name" value="DNA-dir_RNAP_su2_dom"/>
</dbReference>
<dbReference type="InterPro" id="IPR037033">
    <property type="entry name" value="DNA-dir_RNAP_su2_hyb_sf"/>
</dbReference>
<dbReference type="InterPro" id="IPR010243">
    <property type="entry name" value="RNA_pol_bsu_bac"/>
</dbReference>
<dbReference type="InterPro" id="IPR007121">
    <property type="entry name" value="RNA_pol_bsu_CS"/>
</dbReference>
<dbReference type="InterPro" id="IPR007644">
    <property type="entry name" value="RNA_pol_bsu_protrusion"/>
</dbReference>
<dbReference type="InterPro" id="IPR007642">
    <property type="entry name" value="RNA_pol_Rpb2_2"/>
</dbReference>
<dbReference type="InterPro" id="IPR037034">
    <property type="entry name" value="RNA_pol_Rpb2_2_sf"/>
</dbReference>
<dbReference type="InterPro" id="IPR007645">
    <property type="entry name" value="RNA_pol_Rpb2_3"/>
</dbReference>
<dbReference type="InterPro" id="IPR007641">
    <property type="entry name" value="RNA_pol_Rpb2_7"/>
</dbReference>
<dbReference type="InterPro" id="IPR014724">
    <property type="entry name" value="RNA_pol_RPB2_OB-fold"/>
</dbReference>
<dbReference type="NCBIfam" id="NF001616">
    <property type="entry name" value="PRK00405.1"/>
    <property type="match status" value="1"/>
</dbReference>
<dbReference type="NCBIfam" id="TIGR02013">
    <property type="entry name" value="rpoB"/>
    <property type="match status" value="1"/>
</dbReference>
<dbReference type="PANTHER" id="PTHR20856">
    <property type="entry name" value="DNA-DIRECTED RNA POLYMERASE I SUBUNIT 2"/>
    <property type="match status" value="1"/>
</dbReference>
<dbReference type="Pfam" id="PF04563">
    <property type="entry name" value="RNA_pol_Rpb2_1"/>
    <property type="match status" value="2"/>
</dbReference>
<dbReference type="Pfam" id="PF04561">
    <property type="entry name" value="RNA_pol_Rpb2_2"/>
    <property type="match status" value="2"/>
</dbReference>
<dbReference type="Pfam" id="PF04565">
    <property type="entry name" value="RNA_pol_Rpb2_3"/>
    <property type="match status" value="1"/>
</dbReference>
<dbReference type="Pfam" id="PF10385">
    <property type="entry name" value="RNA_pol_Rpb2_45"/>
    <property type="match status" value="1"/>
</dbReference>
<dbReference type="Pfam" id="PF00562">
    <property type="entry name" value="RNA_pol_Rpb2_6"/>
    <property type="match status" value="1"/>
</dbReference>
<dbReference type="Pfam" id="PF04560">
    <property type="entry name" value="RNA_pol_Rpb2_7"/>
    <property type="match status" value="1"/>
</dbReference>
<dbReference type="SUPFAM" id="SSF64484">
    <property type="entry name" value="beta and beta-prime subunits of DNA dependent RNA-polymerase"/>
    <property type="match status" value="1"/>
</dbReference>
<dbReference type="PROSITE" id="PS01166">
    <property type="entry name" value="RNA_POL_BETA"/>
    <property type="match status" value="1"/>
</dbReference>
<keyword id="KW-0240">DNA-directed RNA polymerase</keyword>
<keyword id="KW-0548">Nucleotidyltransferase</keyword>
<keyword id="KW-0804">Transcription</keyword>
<keyword id="KW-0808">Transferase</keyword>
<sequence>MSSNTVNQRVNFASTKNPLEYPDFLEVQLKSFQDFLQLDTPPEKRKKEGLYKVFAENFPIADTRNNFVLEFLDYYIDPPRYTIDDCIERGLTYSVPLKAKLKLYCTDPDHEDFDTVIQDVFLGPIPYMTDKATFVINGAERVVVSQLHRSPGVFFGQSVHANGTKLYSARIIPFKGSWIEFATDINNVMYAYIDRKKKLPVTTLLRAIGFENDKDILEIFNLAEDVKVNKTNLKKVVGRKLAARVLKTWIEDFVDEDTGEVVSIERNEVIIDRETVIEPEHIDEIIDSGVQNILIHKEEPNQSDYSIIYNTLQKDPSNSEKEAVLYIYRQLRNADPADDASAREVINNLFFSEKRYDLGDVGRYRINKKLNLTTDMDVRVLTKEDIIEIIKYLIELINSKADVDDIDHLSNRRVRTVGEQLSNQFAVGLARMSRTIRERMNVRDNEVFTPIDLINAKTISSVINSFFGTNALSQFMDQTNPLAEITHKRRMSALGPGGLSRERAGFEVRDVHYTHYGRLCPIETPEGPNIGLISSLCVFAKINDLGFIETPYRKVDNGKVDLSENGLVYLTAEEEEAKIIAQGNAPLNDDGTFIRNKVKSRQDADYPVVEPSEVELMDVAPQQIASIAASLIPFLEHDDANRALMGSNMMRQAVPLLRSEAPIVGTGIERQLVRDSRTQIAAEGDGVIDFVDATTIRILYDRTEDEEFVSFEPALKEYRIPKFRKTNQNMTIDLRPTCNKGDRVTKGQILTEGYSTENGELALGKNLLVAYMPWKGYNYEDAIVLNERVVREDLLTSVHVEEYSLEVRETKRGMEELTSDIPNVSEEATKDLDENGIVRVGARIQPGDILIGKITPKGESDPSPEEKLLRAIFGDKAGDVKDASLKASPSLKGVIIDKKLFSRVIKNRSSKLADKALLPKIDDEFESKVADLKRILVKKLMVLTEGKVSQGVKDYLGAEVIAKGSKFSASDFDSLDFTAIQLSDWTNDDHANGMIRDLILNFIKKYKELDAELKRKKFAITIGDELPAGIIQMAKVYIAKKRKIGVGDKMAGRHGNKGIVSRVVRQEDMPFLEDGTPVDIVLNPLGVPSRMNIGQIFEAVLGRAGKNLGVKFATPIFDGATLDDLNEWTDKAGLPRYCKTYLCDGGTGERFDQPATVGVTYMLKLGHMVEDKMHARSIGPYSLITQQPLGGKAQFGGQRFGEMEVWALEGFGASHILQEILTIKSDDVVGRSKAYEAIVKGEPMPQPGIPESLNVLLHELRGLGLSINLE</sequence>
<name>RPOB_BACFN</name>
<organism>
    <name type="scientific">Bacteroides fragilis (strain ATCC 25285 / DSM 2151 / CCUG 4856 / JCM 11019 / LMG 10263 / NCTC 9343 / Onslow / VPI 2553 / EN-2)</name>
    <dbReference type="NCBI Taxonomy" id="272559"/>
    <lineage>
        <taxon>Bacteria</taxon>
        <taxon>Pseudomonadati</taxon>
        <taxon>Bacteroidota</taxon>
        <taxon>Bacteroidia</taxon>
        <taxon>Bacteroidales</taxon>
        <taxon>Bacteroidaceae</taxon>
        <taxon>Bacteroides</taxon>
    </lineage>
</organism>
<protein>
    <recommendedName>
        <fullName evidence="1">DNA-directed RNA polymerase subunit beta</fullName>
        <shortName evidence="1">RNAP subunit beta</shortName>
        <ecNumber evidence="1">2.7.7.6</ecNumber>
    </recommendedName>
    <alternativeName>
        <fullName evidence="1">RNA polymerase subunit beta</fullName>
    </alternativeName>
    <alternativeName>
        <fullName evidence="1">Transcriptase subunit beta</fullName>
    </alternativeName>
</protein>
<accession>Q5L897</accession>
<evidence type="ECO:0000255" key="1">
    <source>
        <dbReference type="HAMAP-Rule" id="MF_01321"/>
    </source>
</evidence>
<feature type="chain" id="PRO_0000224031" description="DNA-directed RNA polymerase subunit beta">
    <location>
        <begin position="1"/>
        <end position="1270"/>
    </location>
</feature>